<dbReference type="EC" id="2.3.1.274" evidence="1"/>
<dbReference type="EMBL" id="CP000316">
    <property type="protein sequence ID" value="ABE45555.1"/>
    <property type="molecule type" value="Genomic_DNA"/>
</dbReference>
<dbReference type="RefSeq" id="WP_011484547.1">
    <property type="nucleotide sequence ID" value="NC_007948.1"/>
</dbReference>
<dbReference type="SMR" id="Q126I7"/>
<dbReference type="STRING" id="296591.Bpro_3651"/>
<dbReference type="KEGG" id="pol:Bpro_3651"/>
<dbReference type="eggNOG" id="COG0416">
    <property type="taxonomic scope" value="Bacteria"/>
</dbReference>
<dbReference type="HOGENOM" id="CLU_039379_1_0_4"/>
<dbReference type="OrthoDB" id="9806408at2"/>
<dbReference type="UniPathway" id="UPA00085"/>
<dbReference type="Proteomes" id="UP000001983">
    <property type="component" value="Chromosome"/>
</dbReference>
<dbReference type="GO" id="GO:0005737">
    <property type="term" value="C:cytoplasm"/>
    <property type="evidence" value="ECO:0007669"/>
    <property type="project" value="UniProtKB-SubCell"/>
</dbReference>
<dbReference type="GO" id="GO:0043811">
    <property type="term" value="F:phosphate:acyl-[acyl carrier protein] acyltransferase activity"/>
    <property type="evidence" value="ECO:0007669"/>
    <property type="project" value="UniProtKB-UniRule"/>
</dbReference>
<dbReference type="GO" id="GO:0006633">
    <property type="term" value="P:fatty acid biosynthetic process"/>
    <property type="evidence" value="ECO:0007669"/>
    <property type="project" value="UniProtKB-UniRule"/>
</dbReference>
<dbReference type="GO" id="GO:0008654">
    <property type="term" value="P:phospholipid biosynthetic process"/>
    <property type="evidence" value="ECO:0007669"/>
    <property type="project" value="UniProtKB-KW"/>
</dbReference>
<dbReference type="Gene3D" id="3.40.718.10">
    <property type="entry name" value="Isopropylmalate Dehydrogenase"/>
    <property type="match status" value="1"/>
</dbReference>
<dbReference type="HAMAP" id="MF_00019">
    <property type="entry name" value="PlsX"/>
    <property type="match status" value="1"/>
</dbReference>
<dbReference type="InterPro" id="IPR003664">
    <property type="entry name" value="FA_synthesis"/>
</dbReference>
<dbReference type="InterPro" id="IPR012281">
    <property type="entry name" value="Phospholipid_synth_PlsX-like"/>
</dbReference>
<dbReference type="NCBIfam" id="TIGR00182">
    <property type="entry name" value="plsX"/>
    <property type="match status" value="1"/>
</dbReference>
<dbReference type="PANTHER" id="PTHR30100">
    <property type="entry name" value="FATTY ACID/PHOSPHOLIPID SYNTHESIS PROTEIN PLSX"/>
    <property type="match status" value="1"/>
</dbReference>
<dbReference type="PANTHER" id="PTHR30100:SF1">
    <property type="entry name" value="PHOSPHATE ACYLTRANSFERASE"/>
    <property type="match status" value="1"/>
</dbReference>
<dbReference type="Pfam" id="PF02504">
    <property type="entry name" value="FA_synthesis"/>
    <property type="match status" value="1"/>
</dbReference>
<dbReference type="PIRSF" id="PIRSF002465">
    <property type="entry name" value="Phsphlp_syn_PlsX"/>
    <property type="match status" value="1"/>
</dbReference>
<dbReference type="SUPFAM" id="SSF53659">
    <property type="entry name" value="Isocitrate/Isopropylmalate dehydrogenase-like"/>
    <property type="match status" value="1"/>
</dbReference>
<organism>
    <name type="scientific">Polaromonas sp. (strain JS666 / ATCC BAA-500)</name>
    <dbReference type="NCBI Taxonomy" id="296591"/>
    <lineage>
        <taxon>Bacteria</taxon>
        <taxon>Pseudomonadati</taxon>
        <taxon>Pseudomonadota</taxon>
        <taxon>Betaproteobacteria</taxon>
        <taxon>Burkholderiales</taxon>
        <taxon>Comamonadaceae</taxon>
        <taxon>Polaromonas</taxon>
    </lineage>
</organism>
<keyword id="KW-0963">Cytoplasm</keyword>
<keyword id="KW-0444">Lipid biosynthesis</keyword>
<keyword id="KW-0443">Lipid metabolism</keyword>
<keyword id="KW-0594">Phospholipid biosynthesis</keyword>
<keyword id="KW-1208">Phospholipid metabolism</keyword>
<keyword id="KW-1185">Reference proteome</keyword>
<keyword id="KW-0808">Transferase</keyword>
<protein>
    <recommendedName>
        <fullName evidence="1">Phosphate acyltransferase</fullName>
        <ecNumber evidence="1">2.3.1.274</ecNumber>
    </recommendedName>
    <alternativeName>
        <fullName evidence="1">Acyl-ACP phosphotransacylase</fullName>
    </alternativeName>
    <alternativeName>
        <fullName evidence="1">Acyl-[acyl-carrier-protein]--phosphate acyltransferase</fullName>
    </alternativeName>
    <alternativeName>
        <fullName evidence="1">Phosphate-acyl-ACP acyltransferase</fullName>
    </alternativeName>
</protein>
<comment type="function">
    <text evidence="1">Catalyzes the reversible formation of acyl-phosphate (acyl-PO(4)) from acyl-[acyl-carrier-protein] (acyl-ACP). This enzyme utilizes acyl-ACP as fatty acyl donor, but not acyl-CoA.</text>
</comment>
<comment type="catalytic activity">
    <reaction evidence="1">
        <text>a fatty acyl-[ACP] + phosphate = an acyl phosphate + holo-[ACP]</text>
        <dbReference type="Rhea" id="RHEA:42292"/>
        <dbReference type="Rhea" id="RHEA-COMP:9685"/>
        <dbReference type="Rhea" id="RHEA-COMP:14125"/>
        <dbReference type="ChEBI" id="CHEBI:43474"/>
        <dbReference type="ChEBI" id="CHEBI:59918"/>
        <dbReference type="ChEBI" id="CHEBI:64479"/>
        <dbReference type="ChEBI" id="CHEBI:138651"/>
        <dbReference type="EC" id="2.3.1.274"/>
    </reaction>
</comment>
<comment type="pathway">
    <text evidence="1">Lipid metabolism; phospholipid metabolism.</text>
</comment>
<comment type="subunit">
    <text evidence="1">Homodimer. Probably interacts with PlsY.</text>
</comment>
<comment type="subcellular location">
    <subcellularLocation>
        <location evidence="1">Cytoplasm</location>
    </subcellularLocation>
    <text evidence="1">Associated with the membrane possibly through PlsY.</text>
</comment>
<comment type="similarity">
    <text evidence="1">Belongs to the PlsX family.</text>
</comment>
<feature type="chain" id="PRO_1000001800" description="Phosphate acyltransferase">
    <location>
        <begin position="1"/>
        <end position="371"/>
    </location>
</feature>
<gene>
    <name evidence="1" type="primary">plsX</name>
    <name type="ordered locus">Bpro_3651</name>
</gene>
<name>PLSX_POLSJ</name>
<sequence>MIRIAVDAMGGDVGPDVTVPASLAFLSGHPEAALVLVGQPDVLAAHPQYALLQSHPRCQFVAASEVVTMDDPIEIALRRKKNSSMRVAMNQVKEGVAQAAVSAGNTGALMAIARYVLKTMEGIDRPAIATQLPNAAGGATTVLDLGANVDCTADHLLQFAVMGSALVAAISGKPAPSVGLLNIGEEAIKGSEIIKKAGDLLRSASISGDLNFYGNVEGNDIFKGTTDIVVCDGFVGNVALKASEGLASMIGGFIKAEFSRNILTKFAAIVAYPVLTAFKNRVDHRRYNGAALLGLQGLVFKSHGSADAFAFERALNRAYDAARNNLLERVRERIAHAAPLLLVAAQMAPASDGVSAVSSMAVDPAVSTPAH</sequence>
<reference key="1">
    <citation type="journal article" date="2008" name="Appl. Environ. Microbiol.">
        <title>The genome of Polaromonas sp. strain JS666: insights into the evolution of a hydrocarbon- and xenobiotic-degrading bacterium, and features of relevance to biotechnology.</title>
        <authorList>
            <person name="Mattes T.E."/>
            <person name="Alexander A.K."/>
            <person name="Richardson P.M."/>
            <person name="Munk A.C."/>
            <person name="Han C.S."/>
            <person name="Stothard P."/>
            <person name="Coleman N.V."/>
        </authorList>
    </citation>
    <scope>NUCLEOTIDE SEQUENCE [LARGE SCALE GENOMIC DNA]</scope>
    <source>
        <strain>JS666 / ATCC BAA-500</strain>
    </source>
</reference>
<proteinExistence type="inferred from homology"/>
<evidence type="ECO:0000255" key="1">
    <source>
        <dbReference type="HAMAP-Rule" id="MF_00019"/>
    </source>
</evidence>
<accession>Q126I7</accession>